<name>SGD_PSEPU</name>
<gene>
    <name evidence="5" type="ORF">PpSQ1_00400</name>
</gene>
<protein>
    <recommendedName>
        <fullName evidence="4">6-deoxy-6-sulfo-D-gluconate dehydratase</fullName>
        <shortName evidence="3">SG dehydratase</shortName>
        <ecNumber evidence="2">4.2.1.162</ecNumber>
    </recommendedName>
</protein>
<dbReference type="EC" id="4.2.1.162" evidence="2"/>
<dbReference type="EMBL" id="JTCJ01000004">
    <property type="protein sequence ID" value="KHL76345.1"/>
    <property type="molecule type" value="Genomic_DNA"/>
</dbReference>
<dbReference type="SMR" id="P0DOV7"/>
<dbReference type="GO" id="GO:0016836">
    <property type="term" value="F:hydro-lyase activity"/>
    <property type="evidence" value="ECO:0007669"/>
    <property type="project" value="UniProtKB-ARBA"/>
</dbReference>
<dbReference type="GO" id="GO:0051536">
    <property type="term" value="F:iron-sulfur cluster binding"/>
    <property type="evidence" value="ECO:0007669"/>
    <property type="project" value="UniProtKB-KW"/>
</dbReference>
<dbReference type="GO" id="GO:0046872">
    <property type="term" value="F:metal ion binding"/>
    <property type="evidence" value="ECO:0007669"/>
    <property type="project" value="UniProtKB-KW"/>
</dbReference>
<dbReference type="GO" id="GO:0019752">
    <property type="term" value="P:carboxylic acid metabolic process"/>
    <property type="evidence" value="ECO:0007669"/>
    <property type="project" value="UniProtKB-ARBA"/>
</dbReference>
<dbReference type="FunFam" id="3.50.30.80:FF:000001">
    <property type="entry name" value="Dihydroxy-acid dehydratase"/>
    <property type="match status" value="1"/>
</dbReference>
<dbReference type="Gene3D" id="3.50.30.80">
    <property type="entry name" value="IlvD/EDD C-terminal domain-like"/>
    <property type="match status" value="1"/>
</dbReference>
<dbReference type="InterPro" id="IPR042096">
    <property type="entry name" value="Dihydro-acid_dehy_C"/>
</dbReference>
<dbReference type="InterPro" id="IPR020558">
    <property type="entry name" value="DiOHA_6PGluconate_deHydtase_CS"/>
</dbReference>
<dbReference type="InterPro" id="IPR056740">
    <property type="entry name" value="ILV_EDD_C"/>
</dbReference>
<dbReference type="InterPro" id="IPR000581">
    <property type="entry name" value="ILV_EDD_N"/>
</dbReference>
<dbReference type="InterPro" id="IPR037237">
    <property type="entry name" value="IlvD/EDD_N"/>
</dbReference>
<dbReference type="InterPro" id="IPR052352">
    <property type="entry name" value="Sugar_Degrad_Dehydratases"/>
</dbReference>
<dbReference type="NCBIfam" id="NF004784">
    <property type="entry name" value="PRK06131.1"/>
    <property type="match status" value="1"/>
</dbReference>
<dbReference type="PANTHER" id="PTHR43183:SF2">
    <property type="entry name" value="DIHYDROXY-ACID DEHYDRATASE"/>
    <property type="match status" value="1"/>
</dbReference>
<dbReference type="PANTHER" id="PTHR43183">
    <property type="entry name" value="HYPOTHETICAL DIHYDROXYACID DEHYDRATASE (EUROFUNG)-RELATED"/>
    <property type="match status" value="1"/>
</dbReference>
<dbReference type="Pfam" id="PF24877">
    <property type="entry name" value="ILV_EDD_C"/>
    <property type="match status" value="1"/>
</dbReference>
<dbReference type="Pfam" id="PF00920">
    <property type="entry name" value="ILVD_EDD_N"/>
    <property type="match status" value="1"/>
</dbReference>
<dbReference type="SUPFAM" id="SSF143975">
    <property type="entry name" value="IlvD/EDD N-terminal domain-like"/>
    <property type="match status" value="1"/>
</dbReference>
<dbReference type="SUPFAM" id="SSF52016">
    <property type="entry name" value="LeuD/IlvD-like"/>
    <property type="match status" value="1"/>
</dbReference>
<dbReference type="PROSITE" id="PS00886">
    <property type="entry name" value="ILVD_EDD_1"/>
    <property type="match status" value="1"/>
</dbReference>
<comment type="function">
    <text evidence="2">Catalyzes the dehydration of 6-deoxy-6-sulfo-D-gluconate to 2-dehydro-3,6-dideoxy-6-sulfo-D-gluconate. Is involved in a degradation pathway of sulfoquinovose (SQ) that allows P.putida SQ1 to use SQ as the sole carbon and energy source for growth.</text>
</comment>
<comment type="catalytic activity">
    <reaction evidence="2">
        <text>6-deoxy-6-sulfo-D-gluconate = 2-dehydro-3,6-dideoxy-6-sulfo-D-gluconate + H2O</text>
        <dbReference type="Rhea" id="RHEA:47912"/>
        <dbReference type="ChEBI" id="CHEBI:15377"/>
        <dbReference type="ChEBI" id="CHEBI:88093"/>
        <dbReference type="ChEBI" id="CHEBI:88094"/>
        <dbReference type="EC" id="4.2.1.162"/>
    </reaction>
</comment>
<comment type="cofactor">
    <cofactor evidence="1">
        <name>[4Fe-4S] cluster</name>
        <dbReference type="ChEBI" id="CHEBI:49883"/>
    </cofactor>
    <text evidence="1">Binds 1 [4Fe-4S] cluster.</text>
</comment>
<comment type="subunit">
    <text evidence="1">Homodimer.</text>
</comment>
<comment type="induction">
    <text evidence="2">Is highly up-regulated during growth on sulfoquinovose, compared to growth on glucose or succinate (at protein level).</text>
</comment>
<comment type="similarity">
    <text evidence="4">Belongs to the IlvD/Edd family.</text>
</comment>
<reference key="1">
    <citation type="journal article" date="2015" name="Stand. Genomic Sci.">
        <title>Permanent draft genome sequence of sulfoquinovose-degrading Pseudomonas putida strain SQ1.</title>
        <authorList>
            <person name="Felux A.K."/>
            <person name="Franchini P."/>
            <person name="Schleheck D."/>
        </authorList>
    </citation>
    <scope>NUCLEOTIDE SEQUENCE [LARGE SCALE GENOMIC DNA]</scope>
    <source>
        <strain>SQ1</strain>
    </source>
</reference>
<reference key="2">
    <citation type="journal article" date="2015" name="Proc. Natl. Acad. Sci. U.S.A.">
        <title>Entner-Doudoroff pathway for sulfoquinovose degradation in Pseudomonas putida SQ1.</title>
        <authorList>
            <person name="Felux A.K."/>
            <person name="Spiteller D."/>
            <person name="Klebensberger J."/>
            <person name="Schleheck D."/>
        </authorList>
    </citation>
    <scope>FUNCTION</scope>
    <scope>CATALYTIC ACTIVITY</scope>
    <scope>INDUCTION</scope>
    <source>
        <strain>SQ1</strain>
    </source>
</reference>
<keyword id="KW-0408">Iron</keyword>
<keyword id="KW-0411">Iron-sulfur</keyword>
<keyword id="KW-0456">Lyase</keyword>
<keyword id="KW-0479">Metal-binding</keyword>
<proteinExistence type="evidence at protein level"/>
<feature type="chain" id="PRO_0000438492" description="6-deoxy-6-sulfo-D-gluconate dehydratase">
    <location>
        <begin position="1"/>
        <end position="579"/>
    </location>
</feature>
<feature type="binding site" evidence="1">
    <location>
        <position position="59"/>
    </location>
    <ligand>
        <name>[4Fe-4S] cluster</name>
        <dbReference type="ChEBI" id="CHEBI:49883"/>
    </ligand>
</feature>
<feature type="binding site" evidence="1">
    <location>
        <position position="127"/>
    </location>
    <ligand>
        <name>[4Fe-4S] cluster</name>
        <dbReference type="ChEBI" id="CHEBI:49883"/>
    </ligand>
</feature>
<feature type="binding site" evidence="1">
    <location>
        <position position="200"/>
    </location>
    <ligand>
        <name>[4Fe-4S] cluster</name>
        <dbReference type="ChEBI" id="CHEBI:49883"/>
    </ligand>
</feature>
<organism>
    <name type="scientific">Pseudomonas putida</name>
    <name type="common">Arthrobacter siderocapsulatus</name>
    <dbReference type="NCBI Taxonomy" id="303"/>
    <lineage>
        <taxon>Bacteria</taxon>
        <taxon>Pseudomonadati</taxon>
        <taxon>Pseudomonadota</taxon>
        <taxon>Gammaproteobacteria</taxon>
        <taxon>Pseudomonadales</taxon>
        <taxon>Pseudomonadaceae</taxon>
        <taxon>Pseudomonas</taxon>
    </lineage>
</organism>
<accession>P0DOV7</accession>
<sequence length="579" mass="62544">MSEKHKKIEELRSQRWFAPDTIRAFAHRQRLQQIGLRREEFMGKPVIAILNTWSEMSPCHSHLRDRAEAVKRGVWAAGGFPVELPVQSVGEVMVKPTTMLYRNLLAMEAEELLRSLPIDGAVLLGGCDKSTPGLLMGALSMDLPVIYCPAGPMSNGQWRGVKTGAGTHTKKYWDERRLGLIDTVAWEELEGAMTRSIGTCNTVGTASTMTSIADAMGFTLPGASSIPAADGAHPRMASQCGSAIVDLVWRDRRPSTWLTDKHVANGVAVYMAMGGSTNAAIHLIAIARRAGIDLTLDQLAAAAAKIPVLLNLFPSGTALMEDYHFAGGLRALMRKIEPHLHLECEGATGQSWDSLLADAPCYDDDIIRSLDNPVVSLEQGATLALLRGNLCPDGAVMKSSAAEPRLRRHSGPALVFDDHETLSRMIDDPALEVTADTVLILRNAGPVGAPGMPEWGNLPIPKRLLEAGVRDLLRISDSRMSGTHYGSCVLHVAPEAAVGGPLALVRTGDIIDLDVAAGTLNMRVSDDELARRRAGHVPQHKTYGRSFAALYQQHVTQANEGCDFDFLQAGEAVPEPPIH</sequence>
<evidence type="ECO:0000250" key="1">
    <source>
        <dbReference type="UniProtKB" id="Q1JUQ1"/>
    </source>
</evidence>
<evidence type="ECO:0000269" key="2">
    <source>
    </source>
</evidence>
<evidence type="ECO:0000303" key="3">
    <source>
    </source>
</evidence>
<evidence type="ECO:0000305" key="4"/>
<evidence type="ECO:0000312" key="5">
    <source>
        <dbReference type="EMBL" id="KHL76345.1"/>
    </source>
</evidence>